<feature type="chain" id="PRO_0000147505" description="Tetrahydromethanopterin S-methyltransferase subunit A">
    <location>
        <begin position="1"/>
        <end position="240"/>
    </location>
</feature>
<feature type="topological domain" description="Cytoplasmic" evidence="1">
    <location>
        <begin position="1"/>
        <end position="218"/>
    </location>
</feature>
<feature type="transmembrane region" description="Helical" evidence="1">
    <location>
        <begin position="219"/>
        <end position="239"/>
    </location>
</feature>
<feature type="topological domain" description="Extracellular" evidence="1">
    <location>
        <position position="240"/>
    </location>
</feature>
<feature type="binding site" evidence="1">
    <location>
        <position position="85"/>
    </location>
    <ligand>
        <name>5-hydroxybenzimidazolylcob(I)amide</name>
        <dbReference type="ChEBI" id="CHEBI:60494"/>
        <note>cofactor</note>
    </ligand>
</feature>
<feature type="sequence conflict" description="In Ref. 1; AAC38334." evidence="2" ref="1">
    <original>G</original>
    <variation>R</variation>
    <location>
        <position position="16"/>
    </location>
</feature>
<feature type="sequence conflict" description="In Ref. 1; AAC38334." evidence="2" ref="1">
    <original>N</original>
    <variation>D</variation>
    <location>
        <position position="71"/>
    </location>
</feature>
<feature type="sequence conflict" description="In Ref. 1; AAC38334." evidence="2" ref="1">
    <original>E</original>
    <variation>G</variation>
    <location>
        <position position="127"/>
    </location>
</feature>
<feature type="sequence conflict" description="In Ref. 1; AAC38334." evidence="2" ref="1">
    <original>D</original>
    <variation>E</variation>
    <location>
        <position position="161"/>
    </location>
</feature>
<reference key="1">
    <citation type="journal article" date="1998" name="FEBS Lett.">
        <title>Cloning, sequencing and expression of the genes encoding the sodium translocating N5-methyltetrahydromethanopterin:coenzyme M methyltransferase of the methylotrophic archaeon Methanosarcina mazei Go1.</title>
        <authorList>
            <person name="Lienard T."/>
            <person name="Gottschalk G."/>
        </authorList>
    </citation>
    <scope>NUCLEOTIDE SEQUENCE [GENOMIC DNA]</scope>
    <source>
        <strain>ATCC BAA-159 / DSM 3647 / Goe1 / Go1 / JCM 11833 / OCM 88</strain>
    </source>
</reference>
<reference key="2">
    <citation type="journal article" date="2002" name="J. Mol. Microbiol. Biotechnol.">
        <title>The genome of Methanosarcina mazei: evidence for lateral gene transfer between Bacteria and Archaea.</title>
        <authorList>
            <person name="Deppenmeier U."/>
            <person name="Johann A."/>
            <person name="Hartsch T."/>
            <person name="Merkl R."/>
            <person name="Schmitz R.A."/>
            <person name="Martinez-Arias R."/>
            <person name="Henne A."/>
            <person name="Wiezer A."/>
            <person name="Baeumer S."/>
            <person name="Jacobi C."/>
            <person name="Brueggemann H."/>
            <person name="Lienard T."/>
            <person name="Christmann A."/>
            <person name="Boemecke M."/>
            <person name="Steckel S."/>
            <person name="Bhattacharyya A."/>
            <person name="Lykidis A."/>
            <person name="Overbeek R."/>
            <person name="Klenk H.-P."/>
            <person name="Gunsalus R.P."/>
            <person name="Fritz H.-J."/>
            <person name="Gottschalk G."/>
        </authorList>
    </citation>
    <scope>NUCLEOTIDE SEQUENCE [LARGE SCALE GENOMIC DNA]</scope>
    <source>
        <strain>ATCC BAA-159 / DSM 3647 / Goe1 / Go1 / JCM 11833 / OCM 88</strain>
    </source>
</reference>
<protein>
    <recommendedName>
        <fullName evidence="1">Tetrahydromethanopterin S-methyltransferase subunit A</fullName>
        <ecNumber evidence="1">7.2.1.4</ecNumber>
    </recommendedName>
    <alternativeName>
        <fullName evidence="1">N5-methyltetrahydromethanopterin--coenzyme M methyltransferase subunit A</fullName>
    </alternativeName>
</protein>
<sequence>MADKREPAPGWPILKGEYEVGDVKNSVLVITCGSHLPGKPILDAGAACTGSCKTENLGIEKVVAHIISNPNIRYLLVTGSEVKGHITGQSMMSLHANGVKENRIAGALGAIPYVENLNAAAVARFQEQVQVVNLLDTEDMGAITSKVRELASKDPGAFDADPLVVEISEEGEEEEEGGVVRPVSGEIAVLRSRLKAIEARMMDIGNLNKFHSGVHAGKVEGAMIGLTITISLLGLLLLGR</sequence>
<name>MTRA_METMA</name>
<organism>
    <name type="scientific">Methanosarcina mazei (strain ATCC BAA-159 / DSM 3647 / Goe1 / Go1 / JCM 11833 / OCM 88)</name>
    <name type="common">Methanosarcina frisia</name>
    <dbReference type="NCBI Taxonomy" id="192952"/>
    <lineage>
        <taxon>Archaea</taxon>
        <taxon>Methanobacteriati</taxon>
        <taxon>Methanobacteriota</taxon>
        <taxon>Stenosarchaea group</taxon>
        <taxon>Methanomicrobia</taxon>
        <taxon>Methanosarcinales</taxon>
        <taxon>Methanosarcinaceae</taxon>
        <taxon>Methanosarcina</taxon>
    </lineage>
</organism>
<proteinExistence type="evidence at protein level"/>
<gene>
    <name evidence="1" type="primary">mtrA</name>
    <name type="ordered locus">MM_1543</name>
</gene>
<comment type="function">
    <text>Part of a complex that catalyzes the formation of methyl-coenzyme M and tetrahydromethanopterin from coenzyme M and methyl-tetrahydromethanopterin. This is an energy-conserving, sodium-ion translocating step.</text>
</comment>
<comment type="catalytic activity">
    <reaction evidence="1">
        <text>5-methyl-5,6,7,8-tetrahydromethanopterin + coenzyme M + 2 Na(+)(in) = 5,6,7,8-tetrahydromethanopterin + methyl-coenzyme M + 2 Na(+)(out)</text>
        <dbReference type="Rhea" id="RHEA:53492"/>
        <dbReference type="ChEBI" id="CHEBI:29101"/>
        <dbReference type="ChEBI" id="CHEBI:58103"/>
        <dbReference type="ChEBI" id="CHEBI:58116"/>
        <dbReference type="ChEBI" id="CHEBI:58286"/>
        <dbReference type="ChEBI" id="CHEBI:58319"/>
        <dbReference type="EC" id="7.2.1.4"/>
    </reaction>
</comment>
<comment type="cofactor">
    <cofactor>
        <name>5-hydroxybenzimidazolylcob(I)amide</name>
        <dbReference type="ChEBI" id="CHEBI:60494"/>
    </cofactor>
    <text>Binds 1 5-hydroxybenzimidazolylcobamide group.</text>
</comment>
<comment type="pathway">
    <text evidence="1">One-carbon metabolism; methanogenesis from CO(2); methyl-coenzyme M from 5,10-methylene-5,6,7,8-tetrahydromethanopterin: step 2/2.</text>
</comment>
<comment type="subunit">
    <text evidence="1">The complex is composed of 8 subunits; MtrA, MtrB, MtrC, MtrD, MtrE, MtrF, MtrG and MtrH.</text>
</comment>
<comment type="subcellular location">
    <subcellularLocation>
        <location evidence="1">Cell membrane</location>
        <topology evidence="1">Single-pass membrane protein</topology>
    </subcellularLocation>
</comment>
<comment type="similarity">
    <text evidence="1">Belongs to the MtrA family.</text>
</comment>
<dbReference type="EC" id="7.2.1.4" evidence="1"/>
<dbReference type="EMBL" id="AF042381">
    <property type="protein sequence ID" value="AAC38334.1"/>
    <property type="molecule type" value="Genomic_DNA"/>
</dbReference>
<dbReference type="EMBL" id="AE008384">
    <property type="protein sequence ID" value="AAM31239.1"/>
    <property type="molecule type" value="Genomic_DNA"/>
</dbReference>
<dbReference type="RefSeq" id="WP_011033489.1">
    <property type="nucleotide sequence ID" value="NC_003901.1"/>
</dbReference>
<dbReference type="PDB" id="8WKD">
    <property type="method" value="X-ray"/>
    <property type="resolution" value="1.98 A"/>
    <property type="chains" value="C=148-167"/>
</dbReference>
<dbReference type="PDBsum" id="8WKD"/>
<dbReference type="SMR" id="O59640"/>
<dbReference type="DNASU" id="1479885"/>
<dbReference type="GeneID" id="82160593"/>
<dbReference type="KEGG" id="mma:MM_1543"/>
<dbReference type="PATRIC" id="fig|192952.21.peg.1784"/>
<dbReference type="eggNOG" id="arCOG03221">
    <property type="taxonomic scope" value="Archaea"/>
</dbReference>
<dbReference type="HOGENOM" id="CLU_100863_0_0_2"/>
<dbReference type="BRENDA" id="2.1.1.86">
    <property type="organism ID" value="3270"/>
</dbReference>
<dbReference type="UniPathway" id="UPA00640">
    <property type="reaction ID" value="UER00698"/>
</dbReference>
<dbReference type="Proteomes" id="UP000000595">
    <property type="component" value="Chromosome"/>
</dbReference>
<dbReference type="GO" id="GO:0005886">
    <property type="term" value="C:plasma membrane"/>
    <property type="evidence" value="ECO:0007669"/>
    <property type="project" value="UniProtKB-SubCell"/>
</dbReference>
<dbReference type="GO" id="GO:0050897">
    <property type="term" value="F:cobalt ion binding"/>
    <property type="evidence" value="ECO:0007669"/>
    <property type="project" value="InterPro"/>
</dbReference>
<dbReference type="GO" id="GO:0030269">
    <property type="term" value="F:tetrahydromethanopterin S-methyltransferase activity"/>
    <property type="evidence" value="ECO:0007669"/>
    <property type="project" value="UniProtKB-UniRule"/>
</dbReference>
<dbReference type="GO" id="GO:0019386">
    <property type="term" value="P:methanogenesis, from carbon dioxide"/>
    <property type="evidence" value="ECO:0007669"/>
    <property type="project" value="UniProtKB-UniRule"/>
</dbReference>
<dbReference type="GO" id="GO:0032259">
    <property type="term" value="P:methylation"/>
    <property type="evidence" value="ECO:0007669"/>
    <property type="project" value="UniProtKB-KW"/>
</dbReference>
<dbReference type="GO" id="GO:0006730">
    <property type="term" value="P:one-carbon metabolic process"/>
    <property type="evidence" value="ECO:0007669"/>
    <property type="project" value="UniProtKB-UniRule"/>
</dbReference>
<dbReference type="HAMAP" id="MF_01093">
    <property type="entry name" value="MtrA"/>
    <property type="match status" value="1"/>
</dbReference>
<dbReference type="InterPro" id="IPR030688">
    <property type="entry name" value="MeTrfase_MtrA/MtxA"/>
</dbReference>
<dbReference type="InterPro" id="IPR005778">
    <property type="entry name" value="MtrA"/>
</dbReference>
<dbReference type="NCBIfam" id="TIGR01111">
    <property type="entry name" value="mtrA"/>
    <property type="match status" value="1"/>
</dbReference>
<dbReference type="NCBIfam" id="NF002126">
    <property type="entry name" value="PRK00964.1-4"/>
    <property type="match status" value="1"/>
</dbReference>
<dbReference type="Pfam" id="PF04208">
    <property type="entry name" value="MtrA"/>
    <property type="match status" value="1"/>
</dbReference>
<dbReference type="PIRSF" id="PIRSF500207">
    <property type="entry name" value="MtrA"/>
    <property type="match status" value="1"/>
</dbReference>
<dbReference type="PIRSF" id="PIRSF009452">
    <property type="entry name" value="MtrA_MtxA"/>
    <property type="match status" value="1"/>
</dbReference>
<keyword id="KW-0002">3D-structure</keyword>
<keyword id="KW-1003">Cell membrane</keyword>
<keyword id="KW-0170">Cobalt</keyword>
<keyword id="KW-0472">Membrane</keyword>
<keyword id="KW-0484">Methanogenesis</keyword>
<keyword id="KW-0489">Methyltransferase</keyword>
<keyword id="KW-0554">One-carbon metabolism</keyword>
<keyword id="KW-0808">Transferase</keyword>
<keyword id="KW-1278">Translocase</keyword>
<keyword id="KW-0812">Transmembrane</keyword>
<keyword id="KW-1133">Transmembrane helix</keyword>
<evidence type="ECO:0000255" key="1">
    <source>
        <dbReference type="HAMAP-Rule" id="MF_01093"/>
    </source>
</evidence>
<evidence type="ECO:0000305" key="2"/>
<accession>O59640</accession>